<evidence type="ECO:0000250" key="1"/>
<evidence type="ECO:0000250" key="2">
    <source>
        <dbReference type="UniProtKB" id="Q86UA1"/>
    </source>
</evidence>
<evidence type="ECO:0000256" key="3">
    <source>
        <dbReference type="SAM" id="MobiDB-lite"/>
    </source>
</evidence>
<evidence type="ECO:0000303" key="4">
    <source>
    </source>
</evidence>
<evidence type="ECO:0000303" key="5">
    <source>
    </source>
</evidence>
<evidence type="ECO:0000305" key="6"/>
<evidence type="ECO:0007829" key="7">
    <source>
        <dbReference type="PDB" id="6G70"/>
    </source>
</evidence>
<sequence>MQNSHMEEYRNSDNGSTGNSSEVAVVEHPDFSTEIMNVTEMEQSPDASPSAHASTEENEMANAVNLPVTEAEGDFPPEFEKFWKTVEMNPQDFTGWVYLLQYVEQENHLMAARKAFDKFFVHYPYCYGYWKKYADLEKRHDNIKQSDEVYRRGLQAIPLSVDLWIHYINFLKETLEPGDQETNTTIRGTFEHAVLAAGTDFRSDKLWEMYINWENEQGNLREVTAVYDRILGIPTQLYSHHFQRFKEHVQNNLPRDLLTGEQFIQLRRELASVNGHSGDDGPPGDDLPSGIEDISPAKLITEIENMRHRIIEIHQEMFNYNEHEVSKRWTFEEGIKRPYFHVKPLEKAQPKKNWKEYLEFEIENGTHERVVVLFERCVISCALYEEFWIKYAKYMENHSIEGVRHVFSRACTVHLPKKPMAHMLWAAFEEQQGNINEARIILRTFEECVLGLAMVRLRRVSLERRHGNMEEAEHLLQDAIKNAKSNNESSFYAIKLARHLFKIQKNLPKSRKVLLEAIEKDKENTKLYLNLLEMEYSCDLKQNEENILNCFDKAIHGSLPIKMRITFSQRKVEFLEDFGSDVNKLLNAYDEHQTLLKEQDTLKRKAENGSEEPEEKKAHTEDLSSAQIIDGDLQANQAAYNYSAWYQYNYQNPWNYGQYYPPPPT</sequence>
<keyword id="KW-0002">3D-structure</keyword>
<keyword id="KW-0025">Alternative splicing</keyword>
<keyword id="KW-0507">mRNA processing</keyword>
<keyword id="KW-0508">mRNA splicing</keyword>
<keyword id="KW-0539">Nucleus</keyword>
<keyword id="KW-0597">Phosphoprotein</keyword>
<keyword id="KW-1185">Reference proteome</keyword>
<keyword id="KW-0677">Repeat</keyword>
<proteinExistence type="evidence at protein level"/>
<name>PRP39_MOUSE</name>
<dbReference type="EMBL" id="AK017379">
    <property type="protein sequence ID" value="BAC25514.1"/>
    <property type="molecule type" value="mRNA"/>
</dbReference>
<dbReference type="EMBL" id="AK154170">
    <property type="protein sequence ID" value="BAE32419.1"/>
    <property type="status" value="ALT_INIT"/>
    <property type="molecule type" value="mRNA"/>
</dbReference>
<dbReference type="EMBL" id="AK168462">
    <property type="status" value="NOT_ANNOTATED_CDS"/>
    <property type="molecule type" value="mRNA"/>
</dbReference>
<dbReference type="EMBL" id="BC029153">
    <property type="protein sequence ID" value="AAH29153.1"/>
    <property type="molecule type" value="mRNA"/>
</dbReference>
<dbReference type="PDB" id="6G70">
    <property type="method" value="X-ray"/>
    <property type="resolution" value="3.30 A"/>
    <property type="chains" value="A/B=1-665"/>
</dbReference>
<dbReference type="PDBsum" id="6G70"/>
<dbReference type="SMR" id="Q8K2Z2"/>
<dbReference type="FunCoup" id="Q8K2Z2">
    <property type="interactions" value="1985"/>
</dbReference>
<dbReference type="STRING" id="10090.ENSMUSP00000112953"/>
<dbReference type="GlyGen" id="Q8K2Z2">
    <property type="glycosylation" value="3 sites, 2 N-linked glycans (2 sites), 1 O-linked glycan (1 site)"/>
</dbReference>
<dbReference type="iPTMnet" id="Q8K2Z2"/>
<dbReference type="PhosphoSitePlus" id="Q8K2Z2"/>
<dbReference type="PaxDb" id="10090-ENSMUSP00000112953"/>
<dbReference type="PeptideAtlas" id="Q8K2Z2"/>
<dbReference type="ProteomicsDB" id="291531">
    <molecule id="Q8K2Z2-1"/>
</dbReference>
<dbReference type="ProteomicsDB" id="291532">
    <molecule id="Q8K2Z2-2"/>
</dbReference>
<dbReference type="Pumba" id="Q8K2Z2"/>
<dbReference type="UCSC" id="uc007nra.1">
    <molecule id="Q8K2Z2-2"/>
    <property type="organism name" value="mouse"/>
</dbReference>
<dbReference type="AGR" id="MGI:104602"/>
<dbReference type="MGI" id="MGI:104602">
    <property type="gene designation" value="Prpf39"/>
</dbReference>
<dbReference type="eggNOG" id="KOG1258">
    <property type="taxonomic scope" value="Eukaryota"/>
</dbReference>
<dbReference type="InParanoid" id="Q8K2Z2"/>
<dbReference type="PhylomeDB" id="Q8K2Z2"/>
<dbReference type="ChiTaRS" id="Prpf39">
    <property type="organism name" value="mouse"/>
</dbReference>
<dbReference type="PRO" id="PR:Q8K2Z2"/>
<dbReference type="Proteomes" id="UP000000589">
    <property type="component" value="Unplaced"/>
</dbReference>
<dbReference type="RNAct" id="Q8K2Z2">
    <property type="molecule type" value="protein"/>
</dbReference>
<dbReference type="GO" id="GO:0005634">
    <property type="term" value="C:nucleus"/>
    <property type="evidence" value="ECO:0007669"/>
    <property type="project" value="UniProtKB-SubCell"/>
</dbReference>
<dbReference type="GO" id="GO:0006397">
    <property type="term" value="P:mRNA processing"/>
    <property type="evidence" value="ECO:0007669"/>
    <property type="project" value="UniProtKB-KW"/>
</dbReference>
<dbReference type="GO" id="GO:0008380">
    <property type="term" value="P:RNA splicing"/>
    <property type="evidence" value="ECO:0007669"/>
    <property type="project" value="UniProtKB-KW"/>
</dbReference>
<dbReference type="FunFam" id="1.25.40.10:FF:000063">
    <property type="entry name" value="Pre-mRNA processing factor 39"/>
    <property type="match status" value="1"/>
</dbReference>
<dbReference type="FunFam" id="1.25.40.10:FF:000091">
    <property type="entry name" value="Pre-mRNA-processing factor 39"/>
    <property type="match status" value="1"/>
</dbReference>
<dbReference type="Gene3D" id="1.25.40.10">
    <property type="entry name" value="Tetratricopeptide repeat domain"/>
    <property type="match status" value="2"/>
</dbReference>
<dbReference type="InterPro" id="IPR003107">
    <property type="entry name" value="HAT"/>
</dbReference>
<dbReference type="InterPro" id="IPR011990">
    <property type="entry name" value="TPR-like_helical_dom_sf"/>
</dbReference>
<dbReference type="PANTHER" id="PTHR17204">
    <property type="entry name" value="PRE-MRNA PROCESSING PROTEIN PRP39-RELATED"/>
    <property type="match status" value="1"/>
</dbReference>
<dbReference type="PANTHER" id="PTHR17204:SF5">
    <property type="entry name" value="PRE-MRNA-PROCESSING FACTOR 39"/>
    <property type="match status" value="1"/>
</dbReference>
<dbReference type="Pfam" id="PF23241">
    <property type="entry name" value="HAT_PRP39_C"/>
    <property type="match status" value="1"/>
</dbReference>
<dbReference type="Pfam" id="PF23240">
    <property type="entry name" value="HAT_PRP39_N"/>
    <property type="match status" value="1"/>
</dbReference>
<dbReference type="SMART" id="SM00386">
    <property type="entry name" value="HAT"/>
    <property type="match status" value="7"/>
</dbReference>
<dbReference type="SUPFAM" id="SSF48452">
    <property type="entry name" value="TPR-like"/>
    <property type="match status" value="2"/>
</dbReference>
<gene>
    <name type="primary">Prpf39</name>
</gene>
<feature type="chain" id="PRO_0000259649" description="Pre-mRNA-processing factor 39">
    <location>
        <begin position="1"/>
        <end position="665"/>
    </location>
</feature>
<feature type="repeat" description="HAT 1">
    <location>
        <begin position="107"/>
        <end position="139"/>
    </location>
</feature>
<feature type="repeat" description="HAT 2">
    <location>
        <begin position="141"/>
        <end position="173"/>
    </location>
</feature>
<feature type="repeat" description="HAT 3">
    <location>
        <begin position="181"/>
        <end position="216"/>
    </location>
</feature>
<feature type="repeat" description="HAT 4">
    <location>
        <begin position="218"/>
        <end position="251"/>
    </location>
</feature>
<feature type="repeat" description="HAT 5">
    <location>
        <begin position="331"/>
        <end position="363"/>
    </location>
</feature>
<feature type="repeat" description="HAT 6">
    <location>
        <begin position="365"/>
        <end position="397"/>
    </location>
</feature>
<feature type="repeat" description="HAT 7">
    <location>
        <begin position="402"/>
        <end position="434"/>
    </location>
</feature>
<feature type="region of interest" description="Disordered" evidence="3">
    <location>
        <begin position="1"/>
        <end position="28"/>
    </location>
</feature>
<feature type="region of interest" description="Disordered" evidence="3">
    <location>
        <begin position="599"/>
        <end position="625"/>
    </location>
</feature>
<feature type="compositionally biased region" description="Basic and acidic residues" evidence="3">
    <location>
        <begin position="1"/>
        <end position="11"/>
    </location>
</feature>
<feature type="compositionally biased region" description="Polar residues" evidence="3">
    <location>
        <begin position="12"/>
        <end position="22"/>
    </location>
</feature>
<feature type="compositionally biased region" description="Basic and acidic residues" evidence="3">
    <location>
        <begin position="599"/>
        <end position="622"/>
    </location>
</feature>
<feature type="modified residue" description="Phosphoserine" evidence="2">
    <location>
        <position position="44"/>
    </location>
</feature>
<feature type="splice variant" id="VSP_021498" description="In isoform 2." evidence="4 5">
    <location>
        <begin position="1"/>
        <end position="394"/>
    </location>
</feature>
<feature type="helix" evidence="7">
    <location>
        <begin position="79"/>
        <end position="88"/>
    </location>
</feature>
<feature type="helix" evidence="7">
    <location>
        <begin position="93"/>
        <end position="106"/>
    </location>
</feature>
<feature type="helix" evidence="7">
    <location>
        <begin position="109"/>
        <end position="122"/>
    </location>
</feature>
<feature type="helix" evidence="7">
    <location>
        <begin position="127"/>
        <end position="139"/>
    </location>
</feature>
<feature type="helix" evidence="7">
    <location>
        <begin position="143"/>
        <end position="156"/>
    </location>
</feature>
<feature type="helix" evidence="7">
    <location>
        <begin position="161"/>
        <end position="173"/>
    </location>
</feature>
<feature type="helix" evidence="7">
    <location>
        <begin position="181"/>
        <end position="197"/>
    </location>
</feature>
<feature type="helix" evidence="7">
    <location>
        <begin position="204"/>
        <end position="216"/>
    </location>
</feature>
<feature type="helix" evidence="7">
    <location>
        <begin position="220"/>
        <end position="230"/>
    </location>
</feature>
<feature type="helix" evidence="7">
    <location>
        <begin position="238"/>
        <end position="250"/>
    </location>
</feature>
<feature type="helix" evidence="7">
    <location>
        <begin position="254"/>
        <end position="257"/>
    </location>
</feature>
<feature type="helix" evidence="7">
    <location>
        <begin position="260"/>
        <end position="273"/>
    </location>
</feature>
<feature type="helix" evidence="7">
    <location>
        <begin position="296"/>
        <end position="334"/>
    </location>
</feature>
<feature type="helix" evidence="7">
    <location>
        <begin position="351"/>
        <end position="363"/>
    </location>
</feature>
<feature type="helix" evidence="7">
    <location>
        <begin position="367"/>
        <end position="379"/>
    </location>
</feature>
<feature type="turn" evidence="7">
    <location>
        <begin position="380"/>
        <end position="383"/>
    </location>
</feature>
<feature type="helix" evidence="7">
    <location>
        <begin position="385"/>
        <end position="397"/>
    </location>
</feature>
<feature type="helix" evidence="7">
    <location>
        <begin position="402"/>
        <end position="411"/>
    </location>
</feature>
<feature type="turn" evidence="7">
    <location>
        <begin position="412"/>
        <end position="414"/>
    </location>
</feature>
<feature type="helix" evidence="7">
    <location>
        <begin position="419"/>
        <end position="432"/>
    </location>
</feature>
<feature type="helix" evidence="7">
    <location>
        <begin position="436"/>
        <end position="449"/>
    </location>
</feature>
<feature type="helix" evidence="7">
    <location>
        <begin position="453"/>
        <end position="465"/>
    </location>
</feature>
<feature type="helix" evidence="7">
    <location>
        <begin position="469"/>
        <end position="482"/>
    </location>
</feature>
<feature type="helix" evidence="7">
    <location>
        <begin position="486"/>
        <end position="502"/>
    </location>
</feature>
<feature type="helix" evidence="7">
    <location>
        <begin position="507"/>
        <end position="521"/>
    </location>
</feature>
<feature type="helix" evidence="7">
    <location>
        <begin position="525"/>
        <end position="537"/>
    </location>
</feature>
<feature type="helix" evidence="7">
    <location>
        <begin position="542"/>
        <end position="555"/>
    </location>
</feature>
<feature type="helix" evidence="7">
    <location>
        <begin position="562"/>
        <end position="577"/>
    </location>
</feature>
<feature type="helix" evidence="7">
    <location>
        <begin position="582"/>
        <end position="601"/>
    </location>
</feature>
<reference key="1">
    <citation type="journal article" date="2005" name="Science">
        <title>The transcriptional landscape of the mammalian genome.</title>
        <authorList>
            <person name="Carninci P."/>
            <person name="Kasukawa T."/>
            <person name="Katayama S."/>
            <person name="Gough J."/>
            <person name="Frith M.C."/>
            <person name="Maeda N."/>
            <person name="Oyama R."/>
            <person name="Ravasi T."/>
            <person name="Lenhard B."/>
            <person name="Wells C."/>
            <person name="Kodzius R."/>
            <person name="Shimokawa K."/>
            <person name="Bajic V.B."/>
            <person name="Brenner S.E."/>
            <person name="Batalov S."/>
            <person name="Forrest A.R."/>
            <person name="Zavolan M."/>
            <person name="Davis M.J."/>
            <person name="Wilming L.G."/>
            <person name="Aidinis V."/>
            <person name="Allen J.E."/>
            <person name="Ambesi-Impiombato A."/>
            <person name="Apweiler R."/>
            <person name="Aturaliya R.N."/>
            <person name="Bailey T.L."/>
            <person name="Bansal M."/>
            <person name="Baxter L."/>
            <person name="Beisel K.W."/>
            <person name="Bersano T."/>
            <person name="Bono H."/>
            <person name="Chalk A.M."/>
            <person name="Chiu K.P."/>
            <person name="Choudhary V."/>
            <person name="Christoffels A."/>
            <person name="Clutterbuck D.R."/>
            <person name="Crowe M.L."/>
            <person name="Dalla E."/>
            <person name="Dalrymple B.P."/>
            <person name="de Bono B."/>
            <person name="Della Gatta G."/>
            <person name="di Bernardo D."/>
            <person name="Down T."/>
            <person name="Engstrom P."/>
            <person name="Fagiolini M."/>
            <person name="Faulkner G."/>
            <person name="Fletcher C.F."/>
            <person name="Fukushima T."/>
            <person name="Furuno M."/>
            <person name="Futaki S."/>
            <person name="Gariboldi M."/>
            <person name="Georgii-Hemming P."/>
            <person name="Gingeras T.R."/>
            <person name="Gojobori T."/>
            <person name="Green R.E."/>
            <person name="Gustincich S."/>
            <person name="Harbers M."/>
            <person name="Hayashi Y."/>
            <person name="Hensch T.K."/>
            <person name="Hirokawa N."/>
            <person name="Hill D."/>
            <person name="Huminiecki L."/>
            <person name="Iacono M."/>
            <person name="Ikeo K."/>
            <person name="Iwama A."/>
            <person name="Ishikawa T."/>
            <person name="Jakt M."/>
            <person name="Kanapin A."/>
            <person name="Katoh M."/>
            <person name="Kawasawa Y."/>
            <person name="Kelso J."/>
            <person name="Kitamura H."/>
            <person name="Kitano H."/>
            <person name="Kollias G."/>
            <person name="Krishnan S.P."/>
            <person name="Kruger A."/>
            <person name="Kummerfeld S.K."/>
            <person name="Kurochkin I.V."/>
            <person name="Lareau L.F."/>
            <person name="Lazarevic D."/>
            <person name="Lipovich L."/>
            <person name="Liu J."/>
            <person name="Liuni S."/>
            <person name="McWilliam S."/>
            <person name="Madan Babu M."/>
            <person name="Madera M."/>
            <person name="Marchionni L."/>
            <person name="Matsuda H."/>
            <person name="Matsuzawa S."/>
            <person name="Miki H."/>
            <person name="Mignone F."/>
            <person name="Miyake S."/>
            <person name="Morris K."/>
            <person name="Mottagui-Tabar S."/>
            <person name="Mulder N."/>
            <person name="Nakano N."/>
            <person name="Nakauchi H."/>
            <person name="Ng P."/>
            <person name="Nilsson R."/>
            <person name="Nishiguchi S."/>
            <person name="Nishikawa S."/>
            <person name="Nori F."/>
            <person name="Ohara O."/>
            <person name="Okazaki Y."/>
            <person name="Orlando V."/>
            <person name="Pang K.C."/>
            <person name="Pavan W.J."/>
            <person name="Pavesi G."/>
            <person name="Pesole G."/>
            <person name="Petrovsky N."/>
            <person name="Piazza S."/>
            <person name="Reed J."/>
            <person name="Reid J.F."/>
            <person name="Ring B.Z."/>
            <person name="Ringwald M."/>
            <person name="Rost B."/>
            <person name="Ruan Y."/>
            <person name="Salzberg S.L."/>
            <person name="Sandelin A."/>
            <person name="Schneider C."/>
            <person name="Schoenbach C."/>
            <person name="Sekiguchi K."/>
            <person name="Semple C.A."/>
            <person name="Seno S."/>
            <person name="Sessa L."/>
            <person name="Sheng Y."/>
            <person name="Shibata Y."/>
            <person name="Shimada H."/>
            <person name="Shimada K."/>
            <person name="Silva D."/>
            <person name="Sinclair B."/>
            <person name="Sperling S."/>
            <person name="Stupka E."/>
            <person name="Sugiura K."/>
            <person name="Sultana R."/>
            <person name="Takenaka Y."/>
            <person name="Taki K."/>
            <person name="Tammoja K."/>
            <person name="Tan S.L."/>
            <person name="Tang S."/>
            <person name="Taylor M.S."/>
            <person name="Tegner J."/>
            <person name="Teichmann S.A."/>
            <person name="Ueda H.R."/>
            <person name="van Nimwegen E."/>
            <person name="Verardo R."/>
            <person name="Wei C.L."/>
            <person name="Yagi K."/>
            <person name="Yamanishi H."/>
            <person name="Zabarovsky E."/>
            <person name="Zhu S."/>
            <person name="Zimmer A."/>
            <person name="Hide W."/>
            <person name="Bult C."/>
            <person name="Grimmond S.M."/>
            <person name="Teasdale R.D."/>
            <person name="Liu E.T."/>
            <person name="Brusic V."/>
            <person name="Quackenbush J."/>
            <person name="Wahlestedt C."/>
            <person name="Mattick J.S."/>
            <person name="Hume D.A."/>
            <person name="Kai C."/>
            <person name="Sasaki D."/>
            <person name="Tomaru Y."/>
            <person name="Fukuda S."/>
            <person name="Kanamori-Katayama M."/>
            <person name="Suzuki M."/>
            <person name="Aoki J."/>
            <person name="Arakawa T."/>
            <person name="Iida J."/>
            <person name="Imamura K."/>
            <person name="Itoh M."/>
            <person name="Kato T."/>
            <person name="Kawaji H."/>
            <person name="Kawagashira N."/>
            <person name="Kawashima T."/>
            <person name="Kojima M."/>
            <person name="Kondo S."/>
            <person name="Konno H."/>
            <person name="Nakano K."/>
            <person name="Ninomiya N."/>
            <person name="Nishio T."/>
            <person name="Okada M."/>
            <person name="Plessy C."/>
            <person name="Shibata K."/>
            <person name="Shiraki T."/>
            <person name="Suzuki S."/>
            <person name="Tagami M."/>
            <person name="Waki K."/>
            <person name="Watahiki A."/>
            <person name="Okamura-Oho Y."/>
            <person name="Suzuki H."/>
            <person name="Kawai J."/>
            <person name="Hayashizaki Y."/>
        </authorList>
    </citation>
    <scope>NUCLEOTIDE SEQUENCE [LARGE SCALE MRNA] (ISOFORMS 1 AND 2)</scope>
    <source>
        <strain>C57BL/6J</strain>
        <strain>NOD</strain>
        <tissue>Dendritic cell</tissue>
        <tissue>Embryonic kidney</tissue>
        <tissue>Head</tissue>
    </source>
</reference>
<reference key="2">
    <citation type="journal article" date="2004" name="Genome Res.">
        <title>The status, quality, and expansion of the NIH full-length cDNA project: the Mammalian Gene Collection (MGC).</title>
        <authorList>
            <consortium name="The MGC Project Team"/>
        </authorList>
    </citation>
    <scope>NUCLEOTIDE SEQUENCE [LARGE SCALE MRNA] (ISOFORM 2)</scope>
    <source>
        <strain>FVB/N</strain>
        <tissue>Mammary tumor</tissue>
    </source>
</reference>
<reference key="3">
    <citation type="journal article" date="2010" name="Cell">
        <title>A tissue-specific atlas of mouse protein phosphorylation and expression.</title>
        <authorList>
            <person name="Huttlin E.L."/>
            <person name="Jedrychowski M.P."/>
            <person name="Elias J.E."/>
            <person name="Goswami T."/>
            <person name="Rad R."/>
            <person name="Beausoleil S.A."/>
            <person name="Villen J."/>
            <person name="Haas W."/>
            <person name="Sowa M.E."/>
            <person name="Gygi S.P."/>
        </authorList>
    </citation>
    <scope>IDENTIFICATION BY MASS SPECTROMETRY [LARGE SCALE ANALYSIS]</scope>
    <source>
        <tissue>Spleen</tissue>
        <tissue>Testis</tissue>
    </source>
</reference>
<comment type="function">
    <text evidence="1">Involved in pre-mRNA splicing.</text>
</comment>
<comment type="subcellular location">
    <subcellularLocation>
        <location evidence="1">Nucleus</location>
    </subcellularLocation>
</comment>
<comment type="alternative products">
    <event type="alternative splicing"/>
    <isoform>
        <id>Q8K2Z2-1</id>
        <name>1</name>
        <sequence type="displayed"/>
    </isoform>
    <isoform>
        <id>Q8K2Z2-2</id>
        <name>2</name>
        <sequence type="described" ref="VSP_021498"/>
    </isoform>
</comment>
<comment type="similarity">
    <text evidence="6">Belongs to the PRP39 family.</text>
</comment>
<comment type="sequence caution" evidence="6">
    <conflict type="erroneous initiation">
        <sequence resource="EMBL-CDS" id="BAE32419"/>
    </conflict>
</comment>
<protein>
    <recommendedName>
        <fullName>Pre-mRNA-processing factor 39</fullName>
    </recommendedName>
    <alternativeName>
        <fullName>PRP39 homolog</fullName>
    </alternativeName>
</protein>
<accession>Q8K2Z2</accession>
<accession>Q8C1I4</accession>
<organism>
    <name type="scientific">Mus musculus</name>
    <name type="common">Mouse</name>
    <dbReference type="NCBI Taxonomy" id="10090"/>
    <lineage>
        <taxon>Eukaryota</taxon>
        <taxon>Metazoa</taxon>
        <taxon>Chordata</taxon>
        <taxon>Craniata</taxon>
        <taxon>Vertebrata</taxon>
        <taxon>Euteleostomi</taxon>
        <taxon>Mammalia</taxon>
        <taxon>Eutheria</taxon>
        <taxon>Euarchontoglires</taxon>
        <taxon>Glires</taxon>
        <taxon>Rodentia</taxon>
        <taxon>Myomorpha</taxon>
        <taxon>Muroidea</taxon>
        <taxon>Muridae</taxon>
        <taxon>Murinae</taxon>
        <taxon>Mus</taxon>
        <taxon>Mus</taxon>
    </lineage>
</organism>